<accession>Q8B0I0</accession>
<organism>
    <name type="scientific">Vesicular stomatitis Indiana virus (strain 98COE North America)</name>
    <name type="common">VSIV</name>
    <dbReference type="NCBI Taxonomy" id="434488"/>
    <lineage>
        <taxon>Viruses</taxon>
        <taxon>Riboviria</taxon>
        <taxon>Orthornavirae</taxon>
        <taxon>Negarnaviricota</taxon>
        <taxon>Haploviricotina</taxon>
        <taxon>Monjiviricetes</taxon>
        <taxon>Mononegavirales</taxon>
        <taxon>Rhabdoviridae</taxon>
        <taxon>Alpharhabdovirinae</taxon>
        <taxon>Vesiculovirus</taxon>
        <taxon>Vesiculovirus indiana</taxon>
    </lineage>
</organism>
<sequence>MEVHDFETDEFNDFNEDDYATREFLNPDERMTYLNHADYNLNSPLISDDIDNLIRKFNSLPIPSMWDSKNWDGVLEMLTSCQANPIPTSRMHKWMGNWLMSDNHDASQGYSFLHEVDKEAEITFDVVETFIRGWGNKPIEYIKKEKWTDSFKILAYLCQKFLDLHKLTLILNAVSEVELLNLARTFKGKVRRSSHGTNICRLRVPSLGPTFISEGWAYFKKLDILMDRNFLLMVKDVIIGRMQTVLSMVGRIDNLFSEQDIFSLLNIYRIGDKIVERLGNFSYDLIKMVEPICNLKLMKLARESRPLVPQFPHFENHIKTSVDEGAKIDRGINFLHDQIMSVKTVDLTLVIYGSFRHWGHPFIDYYAGLEKLHSQVTMKKDIDVSYAKALASDLARIVLYQQFNDHKKWFVNGDLLPHDHPFKSHVKENTWPTAAQVQDFGDKWHELPLIKCFEIPDLLDPSIIYSDKSHSMNRSEVLKHVRMNPNTPIPSKKVLQTMLDTKATNWKEFLKEIDEKGLDDDDLIIGLKGKERELKLAGRFFSLMSWKLREYFVITEYLIKTHFVPMFKGLTMADDLTAVIKKMLDSSSGQGLKSYEAICIANHIDYEKWNNHQRKLSNGPVFRVMGQFLGYPSLIERTHEFFEKSLIYYNGRPDLMRVQNNTLINSTSQRVCWQGQEGGLEGLRQKGWSILNLLVIQREAKIRNTAVKVLAQGDNQVICTQYKTKKSRNVVELQGALNQMVSNNEKIMTAIKVGTGRLGLLVNDDETMQSADYLNYGKIPIFRGVIRGLETKRWSRVTCVTNDQIPTCANIMSSVSTNALTVAHFAENPINAMIQYNYFGTFARLLLMMHDPALRQSLYEVQDKIPGLHSSTFKYAMLYLDPSIGGVSGMSLSRFLIRAFPDPVTESLSFWRFIHLHARSEHLKEMSAVFGNPEIAKFRITHIDKLVEDPTSLNIAMGMSPANLLKTEVKKCLIESRQTIRNQVIKDATIYLYHEEDRLRSFLWSINPLFPRFLSEFKSGTFLGVADGLISLFQNSRTIRNSFKKKYHRELDDLIVRSEVSSLTHLGKLHLRRGSCKMWTCSATHADTLRYKSWGRTVIGTTVPHPLEMLGPQHRKETPCAPCNTSGFNYVSVHCPDGIHDVFSSRGPLPAYLGSKTSESTSILQPWERESKVPLIKRATRLRDAISWFVEPDSKLAMTILSNIHSLTGEEWTKRQHGFKRTGSALHRFSTSRMSHGGFASQSTAALTRLMATTDTMRDLGDQNFDFLFQATLLYAQITTTVARDGWTTSCTDHYHIACKSCLRPIEEITLDSSMDYTPPDVSHVLKTWRNGEGSWGQEIKQIYPLEGNWKNLAPAEQSYQVGRCIGFLYGDLAYRKSTHAEDSSLFPLSIQSRIRGRGFLKGLLDGLMRASCCQVIHRRSLAHLKRPANAVYGGLIYLIDKLSVSPPFLSLTRSGPIRDELETIPHKIPTSYPTSNRDMGVIVRNYFKYQCRLIEKGKYRSHYSQLWLFSDVLSIDFLGPFSISTTLLQILYKPSLSGKDKNELRELANLSSLLRSGEGWEDIHVKFFTKDILLCPEEIRHACKFGIAKDNNKDMGYPPWGRESRGTITTIPVYYTTTPYPKMLEMPPRIQNPLLSGIRLGQLPTGAHYKIRSILHGMGIHYRDFLSCGDGSGGMTAALLRENVHSRGIFNSLLELSGSVMRGASPEPPSALETLGGDKSRCVNGETCWEHPSDLCDPRTWDYFLRLKAGLGLQIDLIVMDMEVRDSSTSLKIETNVRNYVHRILDEQGVLIYKTYGTYICESEKNAVTILGPMFKTVDLVQTEFSSSQTSEVYMVCKGLKKLIDEPNPDWSSINESWKNLYAFQSSEQEFARARKVSTYFTLTGIPSQFIPDPFVNLETMLQIFGVPTGVSHAAALKSSDRPADLLTISLFYMAIISYYNINHIRVGPMPPNPPSDGIAQNVGIAITGISFWLSLMEKDIPLYQQCLAVIQQSFPIRWEAVSVKGGYKQKWSTRGDGLPKDTRISDSLAPIGNWIRSLELVRNQVRLNPFNEILFNQLCRTVDNHLKWSNLRNNTGMIAWINRQISKEDRSILMLKSDLHEENSWRD</sequence>
<dbReference type="EC" id="2.7.7.48" evidence="2"/>
<dbReference type="EC" id="3.6.1.-" evidence="1"/>
<dbReference type="EC" id="2.7.7.88" evidence="1"/>
<dbReference type="EC" id="2.1.1.375" evidence="1"/>
<dbReference type="EMBL" id="AF473864">
    <property type="protein sequence ID" value="AAN16984.1"/>
    <property type="molecule type" value="Genomic_RNA"/>
</dbReference>
<dbReference type="SMR" id="Q8B0I0"/>
<dbReference type="Proteomes" id="UP000007624">
    <property type="component" value="Segment"/>
</dbReference>
<dbReference type="GO" id="GO:0030430">
    <property type="term" value="C:host cell cytoplasm"/>
    <property type="evidence" value="ECO:0007669"/>
    <property type="project" value="UniProtKB-SubCell"/>
</dbReference>
<dbReference type="GO" id="GO:0044423">
    <property type="term" value="C:virion component"/>
    <property type="evidence" value="ECO:0007669"/>
    <property type="project" value="UniProtKB-KW"/>
</dbReference>
<dbReference type="GO" id="GO:0005524">
    <property type="term" value="F:ATP binding"/>
    <property type="evidence" value="ECO:0007669"/>
    <property type="project" value="UniProtKB-KW"/>
</dbReference>
<dbReference type="GO" id="GO:0003924">
    <property type="term" value="F:GTPase activity"/>
    <property type="evidence" value="ECO:0007669"/>
    <property type="project" value="RHEA"/>
</dbReference>
<dbReference type="GO" id="GO:0046872">
    <property type="term" value="F:metal ion binding"/>
    <property type="evidence" value="ECO:0007669"/>
    <property type="project" value="UniProtKB-KW"/>
</dbReference>
<dbReference type="GO" id="GO:0004482">
    <property type="term" value="F:mRNA 5'-cap (guanine-N7-)-methyltransferase activity"/>
    <property type="evidence" value="ECO:0007669"/>
    <property type="project" value="InterPro"/>
</dbReference>
<dbReference type="GO" id="GO:0003968">
    <property type="term" value="F:RNA-directed RNA polymerase activity"/>
    <property type="evidence" value="ECO:0007669"/>
    <property type="project" value="UniProtKB-KW"/>
</dbReference>
<dbReference type="GO" id="GO:0039689">
    <property type="term" value="P:negative stranded viral RNA replication"/>
    <property type="evidence" value="ECO:0000250"/>
    <property type="project" value="UniProtKB"/>
</dbReference>
<dbReference type="FunFam" id="3.40.50.150:FF:000473">
    <property type="entry name" value="RNA-directed RNA polymerase L"/>
    <property type="match status" value="1"/>
</dbReference>
<dbReference type="Gene3D" id="3.40.50.150">
    <property type="entry name" value="Vaccinia Virus protein VP39"/>
    <property type="match status" value="1"/>
</dbReference>
<dbReference type="InterPro" id="IPR039530">
    <property type="entry name" value="L_methyltransferase_rhabdo"/>
</dbReference>
<dbReference type="InterPro" id="IPR039736">
    <property type="entry name" value="L_poly_C"/>
</dbReference>
<dbReference type="InterPro" id="IPR048398">
    <property type="entry name" value="Methyltrans_Mon_C"/>
</dbReference>
<dbReference type="InterPro" id="IPR048397">
    <property type="entry name" value="Methyltrans_Mon_CD"/>
</dbReference>
<dbReference type="InterPro" id="IPR026890">
    <property type="entry name" value="Mononeg_mRNAcap"/>
</dbReference>
<dbReference type="InterPro" id="IPR014023">
    <property type="entry name" value="Mononeg_RNA_pol_cat"/>
</dbReference>
<dbReference type="InterPro" id="IPR025786">
    <property type="entry name" value="Mononega_L_MeTrfase"/>
</dbReference>
<dbReference type="InterPro" id="IPR017234">
    <property type="entry name" value="RNA-dir_pol_rhabdovirus"/>
</dbReference>
<dbReference type="InterPro" id="IPR029063">
    <property type="entry name" value="SAM-dependent_MTases_sf"/>
</dbReference>
<dbReference type="NCBIfam" id="TIGR04198">
    <property type="entry name" value="paramyx_RNAcap"/>
    <property type="match status" value="1"/>
</dbReference>
<dbReference type="Pfam" id="PF21080">
    <property type="entry name" value="Methyltrans_Mon_1st"/>
    <property type="match status" value="1"/>
</dbReference>
<dbReference type="Pfam" id="PF14314">
    <property type="entry name" value="Methyltrans_Mon_2nd"/>
    <property type="match status" value="1"/>
</dbReference>
<dbReference type="Pfam" id="PF21081">
    <property type="entry name" value="Methyltrans_Mon_3rd"/>
    <property type="match status" value="1"/>
</dbReference>
<dbReference type="Pfam" id="PF14318">
    <property type="entry name" value="Mononeg_mRNAcap"/>
    <property type="match status" value="1"/>
</dbReference>
<dbReference type="Pfam" id="PF00946">
    <property type="entry name" value="Mononeg_RNA_pol"/>
    <property type="match status" value="1"/>
</dbReference>
<dbReference type="PIRSF" id="PIRSF037546">
    <property type="entry name" value="RNA_pol_RhabdoV_sub"/>
    <property type="match status" value="1"/>
</dbReference>
<dbReference type="PROSITE" id="PS50526">
    <property type="entry name" value="RDRP_SSRNA_NEG_NONSEG"/>
    <property type="match status" value="1"/>
</dbReference>
<dbReference type="PROSITE" id="PS51590">
    <property type="entry name" value="SAM_MT_MNV_L"/>
    <property type="match status" value="1"/>
</dbReference>
<reference key="1">
    <citation type="journal article" date="2002" name="J. Gen. Virol.">
        <title>Full-length genome analysis of natural isolates of vesicular stomatitis virus (Indiana 1 serotype) from North, Central and South America.</title>
        <authorList>
            <person name="Rodriguez L.L."/>
            <person name="Pauszek S.J."/>
            <person name="Bunch T.A."/>
            <person name="Schumann K.R."/>
        </authorList>
    </citation>
    <scope>NUCLEOTIDE SEQUENCE [GENOMIC RNA]</scope>
</reference>
<comment type="function">
    <text evidence="1 2">Multifunctional enzyme responsible for RNA synthesis (replicase and transcriptase), cap addition, and cap methylation. Also performs the polyadenylation of subgenomic mRNAs by a stuttering mechanism at a slipery stop site present at the end of viral genes. The template is composed of the viral RNA tightly encapsidated by the nucleoprotein (N). L is packaged into virions during assembly and translocates to the 3' leader promoter to initiate transcription after entering the host cells. During transcription and replication of the genome, L does not bind the N-RNA complex directly, but is bridged by its non-catalytic cofactor P, which interacts with L and N oligomers simultaneously (By similarity). In the transcription mode, the polymerase performs the sequential transcription of all mRNAs using a termination-reinitiation mechanism responding to gene start and gene end signals. Some polymerase disengage from the template at each gene junction, resulting in a decreasing abundance of transcripts from the 3' to the 5' end of the genome (By similarity). The first gene is the most transcribed, and the last the least transcribed (By similarity). The viral phosphoprotein helps the polymerase to engage the N-RNA template and acts as a processivity factor. Polyribonucleotidyl transferase (PRNTase) adds the cap structure when the nascent RNA chain length has reached few nucleotides. Ribose 2'-O methylation of viral mRNA cap precedes and facilitates subsequent guanine-N-7 methylation, both activities being carried by the viral polymerase (By similarity). In the replication mode, the polymerase replicates the whole viral genome without recognizing the gene end transcriptional signals (By similarity). The ability of the polymerase to override the gene end signals as it is producing the antigenome is probably due to replicative RNA becoming encapsidated with nucleoprotein as it is synthesized (By similarity).</text>
</comment>
<comment type="catalytic activity">
    <reaction evidence="3">
        <text>RNA(n) + a ribonucleoside 5'-triphosphate = RNA(n+1) + diphosphate</text>
        <dbReference type="Rhea" id="RHEA:21248"/>
        <dbReference type="Rhea" id="RHEA-COMP:14527"/>
        <dbReference type="Rhea" id="RHEA-COMP:17342"/>
        <dbReference type="ChEBI" id="CHEBI:33019"/>
        <dbReference type="ChEBI" id="CHEBI:61557"/>
        <dbReference type="ChEBI" id="CHEBI:140395"/>
        <dbReference type="EC" id="2.7.7.48"/>
    </reaction>
</comment>
<comment type="catalytic activity">
    <reaction evidence="1">
        <text>GTP + H2O = GDP + phosphate + H(+)</text>
        <dbReference type="Rhea" id="RHEA:19669"/>
        <dbReference type="ChEBI" id="CHEBI:15377"/>
        <dbReference type="ChEBI" id="CHEBI:15378"/>
        <dbReference type="ChEBI" id="CHEBI:37565"/>
        <dbReference type="ChEBI" id="CHEBI:43474"/>
        <dbReference type="ChEBI" id="CHEBI:58189"/>
    </reaction>
</comment>
<comment type="catalytic activity">
    <reaction evidence="1">
        <text>a 5'-end triphospho-adenylyl-adenylyl-cytidylyl-adenosine in mRNA + GDP + H(+) = a 5'-end (5'-triphosphoguanosine)-adenylyl-adenylyl-cytidylyl-adenosine in mRNA + diphosphate</text>
        <dbReference type="Rhea" id="RHEA:65436"/>
        <dbReference type="Rhea" id="RHEA-COMP:16797"/>
        <dbReference type="Rhea" id="RHEA-COMP:16799"/>
        <dbReference type="ChEBI" id="CHEBI:15378"/>
        <dbReference type="ChEBI" id="CHEBI:33019"/>
        <dbReference type="ChEBI" id="CHEBI:58189"/>
        <dbReference type="ChEBI" id="CHEBI:156484"/>
        <dbReference type="ChEBI" id="CHEBI:156503"/>
        <dbReference type="EC" id="2.7.7.88"/>
    </reaction>
</comment>
<comment type="catalytic activity">
    <reaction evidence="1">
        <text>a 5'-end (5'-triphosphoguanosine)-adenylyl-adenylyl-cytidylyl-adenosine in mRNA + 2 S-adenosyl-L-methionine = a 5'-end (N(7)-methyl 5'-triphosphoguanosine)-(2'-O-methyladenylyl)-adenylyl-cytidylyl-adenosine in mRNA + 2 S-adenosyl-L-homocysteine + H(+)</text>
        <dbReference type="Rhea" id="RHEA:65376"/>
        <dbReference type="Rhea" id="RHEA-COMP:16797"/>
        <dbReference type="Rhea" id="RHEA-COMP:16798"/>
        <dbReference type="ChEBI" id="CHEBI:15378"/>
        <dbReference type="ChEBI" id="CHEBI:57856"/>
        <dbReference type="ChEBI" id="CHEBI:59789"/>
        <dbReference type="ChEBI" id="CHEBI:156483"/>
        <dbReference type="ChEBI" id="CHEBI:156484"/>
        <dbReference type="EC" id="2.1.1.375"/>
    </reaction>
</comment>
<comment type="catalytic activity">
    <reaction evidence="1">
        <text>a 5'-end (5'-triphosphoguanosine)-adenylyl-adenylyl-cytidylyl-adenosine in mRNA + S-adenosyl-L-methionine = a 5'-end (5'-triphosphoguanosine)-(2'-O-methyladenylyl)-adenylyl-cytidylyl-adenosine in mRNA + S-adenosyl-L-homocysteine + H(+)</text>
        <dbReference type="Rhea" id="RHEA:65380"/>
        <dbReference type="Rhea" id="RHEA-COMP:16797"/>
        <dbReference type="Rhea" id="RHEA-COMP:16801"/>
        <dbReference type="ChEBI" id="CHEBI:15378"/>
        <dbReference type="ChEBI" id="CHEBI:57856"/>
        <dbReference type="ChEBI" id="CHEBI:59789"/>
        <dbReference type="ChEBI" id="CHEBI:156482"/>
        <dbReference type="ChEBI" id="CHEBI:156484"/>
    </reaction>
</comment>
<comment type="catalytic activity">
    <reaction evidence="1">
        <text>a 5'-end (5'-triphosphoguanosine)-(2'-O-methyladenylyl)-adenylyl-cytidylyl-adenosine in mRNA + S-adenosyl-L-methionine = a 5'-end (N(7)-methyl 5'-triphosphoguanosine)-(2'-O-methyladenylyl)-adenylyl-cytidylyl-adenosine in mRNA + S-adenosyl-L-homocysteine</text>
        <dbReference type="Rhea" id="RHEA:65440"/>
        <dbReference type="Rhea" id="RHEA-COMP:16798"/>
        <dbReference type="Rhea" id="RHEA-COMP:16801"/>
        <dbReference type="ChEBI" id="CHEBI:57856"/>
        <dbReference type="ChEBI" id="CHEBI:59789"/>
        <dbReference type="ChEBI" id="CHEBI:156482"/>
        <dbReference type="ChEBI" id="CHEBI:156483"/>
    </reaction>
</comment>
<comment type="activity regulation">
    <text evidence="1">The GDP polyribonucleotidyltransferase activity is inhibited by the GDP analog DAPDP.</text>
</comment>
<comment type="subunit">
    <text evidence="1">May form homodimer. Interacts with the P protein; the association of P and L forms the polymerase complex, positions it on the template and allows to package the L polymerase in the virion, since P acts as a bridge between N and L. L binds loosely to N and is further bridged by the P protein, which interacts with L and N oligomers simultaneously.</text>
</comment>
<comment type="subcellular location">
    <subcellularLocation>
        <location evidence="1">Virion</location>
    </subcellularLocation>
    <subcellularLocation>
        <location evidence="1">Host cytoplasm</location>
    </subcellularLocation>
    <text evidence="1">L and P are packaged asymmetrically towards the blunt end of the virus. About 55 copies of L are present in the virion.</text>
</comment>
<comment type="domain">
    <text evidence="1">The RNA-dependent RNA polymerase (RdRp) domain is responsible for the RNA sythesis. The polyribonucleotidyl transferase (PRNTase) domain is responsible for the initiation of transcription at the 3'-end of the genome (priming) and pre-mRNA 5'-capping during start-stop transcription. The methyltransferase (MTase) domain is responsible for the cap methylation.</text>
</comment>
<comment type="similarity">
    <text evidence="5">Belongs to the rhabdoviridae protein L family.</text>
</comment>
<evidence type="ECO:0000250" key="1">
    <source>
        <dbReference type="UniProtKB" id="P03523"/>
    </source>
</evidence>
<evidence type="ECO:0000250" key="2">
    <source>
        <dbReference type="UniProtKB" id="P28887"/>
    </source>
</evidence>
<evidence type="ECO:0000255" key="3">
    <source>
        <dbReference type="PROSITE-ProRule" id="PRU00539"/>
    </source>
</evidence>
<evidence type="ECO:0000255" key="4">
    <source>
        <dbReference type="PROSITE-ProRule" id="PRU00923"/>
    </source>
</evidence>
<evidence type="ECO:0000305" key="5"/>
<keyword id="KW-0067">ATP-binding</keyword>
<keyword id="KW-1035">Host cytoplasm</keyword>
<keyword id="KW-0378">Hydrolase</keyword>
<keyword id="KW-0460">Magnesium</keyword>
<keyword id="KW-0479">Metal-binding</keyword>
<keyword id="KW-0489">Methyltransferase</keyword>
<keyword id="KW-0506">mRNA capping</keyword>
<keyword id="KW-0507">mRNA processing</keyword>
<keyword id="KW-0511">Multifunctional enzyme</keyword>
<keyword id="KW-0547">Nucleotide-binding</keyword>
<keyword id="KW-0548">Nucleotidyltransferase</keyword>
<keyword id="KW-0696">RNA-directed RNA polymerase</keyword>
<keyword id="KW-0949">S-adenosyl-L-methionine</keyword>
<keyword id="KW-0808">Transferase</keyword>
<keyword id="KW-0693">Viral RNA replication</keyword>
<keyword id="KW-0946">Virion</keyword>
<keyword id="KW-0862">Zinc</keyword>
<protein>
    <recommendedName>
        <fullName>RNA-directed RNA polymerase L</fullName>
        <shortName>Protein L</shortName>
    </recommendedName>
    <alternativeName>
        <fullName>Large structural protein</fullName>
    </alternativeName>
    <alternativeName>
        <fullName>Replicase</fullName>
    </alternativeName>
    <alternativeName>
        <fullName>Transcriptase</fullName>
    </alternativeName>
    <domain>
        <recommendedName>
            <fullName>RNA-directed RNA polymerase</fullName>
            <ecNumber evidence="2">2.7.7.48</ecNumber>
        </recommendedName>
    </domain>
    <domain>
        <recommendedName>
            <fullName evidence="5">GTP phosphohydrolase</fullName>
            <ecNumber evidence="1">3.6.1.-</ecNumber>
        </recommendedName>
    </domain>
    <domain>
        <recommendedName>
            <fullName evidence="5">GDP polyribonucleotidyltransferase</fullName>
            <ecNumber evidence="1">2.7.7.88</ecNumber>
        </recommendedName>
        <alternativeName>
            <fullName evidence="5">PRNTase</fullName>
        </alternativeName>
    </domain>
    <domain>
        <recommendedName>
            <fullName evidence="5">mRNA cap methyltransferase</fullName>
            <ecNumber evidence="1">2.1.1.375</ecNumber>
        </recommendedName>
        <alternativeName>
            <fullName evidence="1">mRNA (guanine-N(7)-)-methyltransferase</fullName>
            <shortName evidence="1">G-N7-MTase</shortName>
        </alternativeName>
        <alternativeName>
            <fullName evidence="1">mRNA (nucleoside-2'-O-)-methyltransferase</fullName>
            <shortName evidence="1">N1-2'-O-MTase</shortName>
        </alternativeName>
    </domain>
</protein>
<name>L_VSIVN</name>
<organismHost>
    <name type="scientific">Aedes</name>
    <dbReference type="NCBI Taxonomy" id="7158"/>
</organismHost>
<organismHost>
    <name type="scientific">Bos taurus</name>
    <name type="common">Bovine</name>
    <dbReference type="NCBI Taxonomy" id="9913"/>
</organismHost>
<organismHost>
    <name type="scientific">Culicoides</name>
    <dbReference type="NCBI Taxonomy" id="58271"/>
</organismHost>
<organismHost>
    <name type="scientific">Equus asinus</name>
    <name type="common">Donkey</name>
    <name type="synonym">Equus africanus asinus</name>
    <dbReference type="NCBI Taxonomy" id="9793"/>
</organismHost>
<organismHost>
    <name type="scientific">Equus caballus</name>
    <name type="common">Horse</name>
    <dbReference type="NCBI Taxonomy" id="9796"/>
</organismHost>
<organismHost>
    <name type="scientific">Homo sapiens</name>
    <name type="common">Human</name>
    <dbReference type="NCBI Taxonomy" id="9606"/>
</organismHost>
<organismHost>
    <name type="scientific">Lutzomyia</name>
    <dbReference type="NCBI Taxonomy" id="252607"/>
</organismHost>
<organismHost>
    <name type="scientific">Musca domestica</name>
    <name type="common">House fly</name>
    <dbReference type="NCBI Taxonomy" id="7370"/>
</organismHost>
<organismHost>
    <name type="scientific">Simuliidae</name>
    <name type="common">black flies</name>
    <dbReference type="NCBI Taxonomy" id="7190"/>
</organismHost>
<organismHost>
    <name type="scientific">Sus scrofa</name>
    <name type="common">Pig</name>
    <dbReference type="NCBI Taxonomy" id="9823"/>
</organismHost>
<feature type="chain" id="PRO_0000287264" description="RNA-directed RNA polymerase L">
    <location>
        <begin position="1"/>
        <end position="2109"/>
    </location>
</feature>
<feature type="domain" description="RdRp catalytic" evidence="3">
    <location>
        <begin position="598"/>
        <end position="784"/>
    </location>
</feature>
<feature type="domain" description="Mononegavirus-type SAM-dependent 2'-O-MTase" evidence="4">
    <location>
        <begin position="1640"/>
        <end position="1837"/>
    </location>
</feature>
<feature type="region of interest" description="Capping domain" evidence="1">
    <location>
        <begin position="866"/>
        <end position="1334"/>
    </location>
</feature>
<feature type="region of interest" description="PRNTase domain" evidence="1">
    <location>
        <begin position="1081"/>
        <end position="1331"/>
    </location>
</feature>
<feature type="region of interest" description="priming-capping loop" evidence="1">
    <location>
        <begin position="1152"/>
        <end position="1189"/>
    </location>
</feature>
<feature type="region of interest" description="Connector domain" evidence="1">
    <location>
        <begin position="1358"/>
        <end position="1557"/>
    </location>
</feature>
<feature type="active site" description="Nucleophile; for GDP polyribonucleotidyltransferase" evidence="1">
    <location>
        <position position="1227"/>
    </location>
</feature>
<feature type="active site" description="For mRNA (nucleoside-2'-O-)-methyltransferase 2" evidence="1">
    <location>
        <position position="1651"/>
    </location>
</feature>
<feature type="active site" description="For mRNA (guanine-N(7)-)-methyltransferase and mRNA (nucleoside-2'-O-)-methyltransferase 2" evidence="1">
    <location>
        <position position="1762"/>
    </location>
</feature>
<feature type="active site" description="For mRNA (nucleoside-2'-O-)-methyltransferase 2" evidence="1">
    <location>
        <position position="1795"/>
    </location>
</feature>
<feature type="active site" description="For mRNA (nucleoside-2'-O-)-methyltransferase 2" evidence="1">
    <location>
        <position position="1833"/>
    </location>
</feature>
<feature type="binding site" evidence="2">
    <location>
        <position position="605"/>
    </location>
    <ligand>
        <name>Mg(2+)</name>
        <dbReference type="ChEBI" id="CHEBI:18420"/>
        <note>catalytic; for RNA-directed RNA polymerase activity</note>
    </ligand>
</feature>
<feature type="binding site" evidence="2">
    <location>
        <position position="714"/>
    </location>
    <ligand>
        <name>Mg(2+)</name>
        <dbReference type="ChEBI" id="CHEBI:18420"/>
        <note>catalytic; for RNA-directed RNA polymerase activity</note>
    </ligand>
</feature>
<feature type="binding site" evidence="1">
    <location>
        <position position="1081"/>
    </location>
    <ligand>
        <name>Zn(2+)</name>
        <dbReference type="ChEBI" id="CHEBI:29105"/>
        <note>structural</note>
    </ligand>
</feature>
<feature type="binding site" evidence="1">
    <location>
        <position position="1108"/>
    </location>
    <ligand>
        <name>Zn(2+)</name>
        <dbReference type="ChEBI" id="CHEBI:29105"/>
        <note>structural</note>
    </ligand>
</feature>
<feature type="binding site" evidence="1">
    <location>
        <position position="1120"/>
    </location>
    <ligand>
        <name>Zn(2+)</name>
        <dbReference type="ChEBI" id="CHEBI:29105"/>
        <label>2</label>
        <note>structural</note>
    </ligand>
</feature>
<feature type="binding site" evidence="1">
    <location>
        <position position="1123"/>
    </location>
    <ligand>
        <name>Zn(2+)</name>
        <dbReference type="ChEBI" id="CHEBI:29105"/>
        <label>2</label>
        <note>structural</note>
    </ligand>
</feature>
<feature type="binding site" evidence="1">
    <location>
        <position position="1294"/>
    </location>
    <ligand>
        <name>Zn(2+)</name>
        <dbReference type="ChEBI" id="CHEBI:29105"/>
        <label>2</label>
        <note>structural</note>
    </ligand>
</feature>
<feature type="binding site" evidence="1">
    <location>
        <position position="1296"/>
    </location>
    <ligand>
        <name>Zn(2+)</name>
        <dbReference type="ChEBI" id="CHEBI:29105"/>
        <label>2</label>
        <note>structural</note>
    </ligand>
</feature>
<feature type="binding site" evidence="1">
    <location>
        <position position="1299"/>
    </location>
    <ligand>
        <name>Zn(2+)</name>
        <dbReference type="ChEBI" id="CHEBI:29105"/>
        <note>structural</note>
    </ligand>
</feature>
<feature type="binding site" evidence="1">
    <location>
        <position position="1302"/>
    </location>
    <ligand>
        <name>Zn(2+)</name>
        <dbReference type="ChEBI" id="CHEBI:29105"/>
        <note>structural</note>
    </ligand>
</feature>
<feature type="site" description="Interaction with the phosphoprotein" evidence="1">
    <location>
        <position position="704"/>
    </location>
</feature>
<feature type="site" description="Important for escaping from the 3'-terminal leader promotter followed by the formation of a stable leaderRNA elongation complex" evidence="1">
    <location>
        <position position="1183"/>
    </location>
</feature>
<feature type="site" description="Interaction with the phosphoprotein" evidence="1">
    <location>
        <position position="1419"/>
    </location>
</feature>
<feature type="site" description="Interaction with the phosphoprotein" evidence="1">
    <location>
        <position position="1427"/>
    </location>
</feature>
<feature type="site" description="Interaction with the phosphoprotein" evidence="1">
    <location>
        <position position="1496"/>
    </location>
</feature>
<feature type="site" description="Interaction with the phosphoprotein" evidence="1">
    <location>
        <position position="1911"/>
    </location>
</feature>
<feature type="site" description="Interaction with the phosphoprotein" evidence="1">
    <location>
        <position position="1981"/>
    </location>
</feature>
<feature type="site" description="Interaction with the phosphoprotein" evidence="1">
    <location>
        <position position="2022"/>
    </location>
</feature>
<feature type="site" description="Interaction with the phosphoprotein" evidence="1">
    <location>
        <position position="2097"/>
    </location>
</feature>
<feature type="site" description="Interaction with the phosphoprotein" evidence="1">
    <location>
        <position position="2098"/>
    </location>
</feature>
<proteinExistence type="inferred from homology"/>
<gene>
    <name type="primary">L</name>
</gene>